<evidence type="ECO:0000250" key="1">
    <source>
        <dbReference type="UniProtKB" id="P0A9B2"/>
    </source>
</evidence>
<evidence type="ECO:0000305" key="2"/>
<proteinExistence type="inferred from homology"/>
<keyword id="KW-0963">Cytoplasm</keyword>
<keyword id="KW-0324">Glycolysis</keyword>
<keyword id="KW-0520">NAD</keyword>
<keyword id="KW-0547">Nucleotide-binding</keyword>
<keyword id="KW-0560">Oxidoreductase</keyword>
<sequence>IVFRAAQERSDIEIVAINDLLDAEYMAYMLKYDSTHGRFNGSVEVKDGHLVVNGQTIRVTAEKDPANLKWNEVGVDVVAEATGIFLTDETARKHIAAGAKKVVLTGPSKDDTPMFVMGVNLKSYAGQEIVSNASCTTNCLAPLAKVINDKFGIVEALMTTVHATTATQKTVDGPFHKDWRGGRGASQNIIPSSTGAAKAVGKVIPELNGKLTGMAFRVPTPNVSVVDLTARLEKPASYKEVCAAIKEAAEGELKGVLGYTEDDVVSTDFNGEKLTSVFDAKAGIALNDNFVKLV</sequence>
<name>G3P_SEROD</name>
<reference key="1">
    <citation type="journal article" date="1991" name="J. Gen. Microbiol.">
        <title>Molecular and evolutionary relationships among enteric bacteria.</title>
        <authorList>
            <person name="Lawrence J.G."/>
            <person name="Ochman H."/>
            <person name="Hartl D.L."/>
        </authorList>
    </citation>
    <scope>NUCLEOTIDE SEQUENCE [GENOMIC DNA]</scope>
</reference>
<protein>
    <recommendedName>
        <fullName evidence="1">Glyceraldehyde-3-phosphate dehydrogenase</fullName>
        <shortName evidence="1">GAPDH</shortName>
        <ecNumber evidence="1">1.2.1.12</ecNumber>
    </recommendedName>
    <alternativeName>
        <fullName evidence="1">NAD-dependent glyceraldehyde-3-phosphate dehydrogenase</fullName>
    </alternativeName>
</protein>
<gene>
    <name type="primary">gap</name>
</gene>
<accession>P24753</accession>
<feature type="chain" id="PRO_0000145681" description="Glyceraldehyde-3-phosphate dehydrogenase">
    <location>
        <begin position="1" status="less than"/>
        <end position="294" status="greater than"/>
    </location>
</feature>
<feature type="active site" description="Nucleophile" evidence="1">
    <location>
        <position position="135"/>
    </location>
</feature>
<feature type="binding site" evidence="1">
    <location>
        <position position="19"/>
    </location>
    <ligand>
        <name>NAD(+)</name>
        <dbReference type="ChEBI" id="CHEBI:57540"/>
    </ligand>
</feature>
<feature type="binding site" evidence="1">
    <location>
        <position position="63"/>
    </location>
    <ligand>
        <name>NAD(+)</name>
        <dbReference type="ChEBI" id="CHEBI:57540"/>
    </ligand>
</feature>
<feature type="binding site" evidence="1">
    <location>
        <position position="105"/>
    </location>
    <ligand>
        <name>NAD(+)</name>
        <dbReference type="ChEBI" id="CHEBI:57540"/>
    </ligand>
</feature>
<feature type="binding site" evidence="1">
    <location>
        <begin position="134"/>
        <end position="136"/>
    </location>
    <ligand>
        <name>D-glyceraldehyde 3-phosphate</name>
        <dbReference type="ChEBI" id="CHEBI:59776"/>
    </ligand>
</feature>
<feature type="binding site" evidence="1">
    <location>
        <position position="165"/>
    </location>
    <ligand>
        <name>D-glyceraldehyde 3-phosphate</name>
        <dbReference type="ChEBI" id="CHEBI:59776"/>
    </ligand>
</feature>
<feature type="binding site" evidence="1">
    <location>
        <begin position="194"/>
        <end position="195"/>
    </location>
    <ligand>
        <name>D-glyceraldehyde 3-phosphate</name>
        <dbReference type="ChEBI" id="CHEBI:59776"/>
    </ligand>
</feature>
<feature type="binding site" evidence="1">
    <location>
        <position position="217"/>
    </location>
    <ligand>
        <name>D-glyceraldehyde 3-phosphate</name>
        <dbReference type="ChEBI" id="CHEBI:59776"/>
    </ligand>
</feature>
<feature type="site" description="Activates thiol group during catalysis" evidence="1">
    <location>
        <position position="162"/>
    </location>
</feature>
<feature type="non-terminal residue">
    <location>
        <position position="1"/>
    </location>
</feature>
<feature type="non-terminal residue">
    <location>
        <position position="294"/>
    </location>
</feature>
<organism>
    <name type="scientific">Serratia odorifera</name>
    <dbReference type="NCBI Taxonomy" id="618"/>
    <lineage>
        <taxon>Bacteria</taxon>
        <taxon>Pseudomonadati</taxon>
        <taxon>Pseudomonadota</taxon>
        <taxon>Gammaproteobacteria</taxon>
        <taxon>Enterobacterales</taxon>
        <taxon>Yersiniaceae</taxon>
        <taxon>Serratia</taxon>
    </lineage>
</organism>
<comment type="function">
    <text evidence="1">Catalyzes the oxidative phosphorylation of glyceraldehyde 3-phosphate (G3P) to 1,3-bisphosphoglycerate (BPG) using the cofactor NAD. The first reaction step involves the formation of a hemiacetal intermediate between G3P and a cysteine residue, and this hemiacetal intermediate is then oxidized to a thioester, with concomitant reduction of NAD to NADH. The reduced NADH is then exchanged with the second NAD, and the thioester is attacked by a nucleophilic inorganic phosphate to produce BPG.</text>
</comment>
<comment type="catalytic activity">
    <reaction evidence="1">
        <text>D-glyceraldehyde 3-phosphate + phosphate + NAD(+) = (2R)-3-phospho-glyceroyl phosphate + NADH + H(+)</text>
        <dbReference type="Rhea" id="RHEA:10300"/>
        <dbReference type="ChEBI" id="CHEBI:15378"/>
        <dbReference type="ChEBI" id="CHEBI:43474"/>
        <dbReference type="ChEBI" id="CHEBI:57540"/>
        <dbReference type="ChEBI" id="CHEBI:57604"/>
        <dbReference type="ChEBI" id="CHEBI:57945"/>
        <dbReference type="ChEBI" id="CHEBI:59776"/>
        <dbReference type="EC" id="1.2.1.12"/>
    </reaction>
</comment>
<comment type="pathway">
    <text evidence="2">Carbohydrate degradation; glycolysis; pyruvate from D-glyceraldehyde 3-phosphate: step 1/5.</text>
</comment>
<comment type="subunit">
    <text evidence="1">Homotetramer.</text>
</comment>
<comment type="subcellular location">
    <subcellularLocation>
        <location evidence="2">Cytoplasm</location>
    </subcellularLocation>
</comment>
<comment type="similarity">
    <text evidence="2">Belongs to the glyceraldehyde-3-phosphate dehydrogenase family.</text>
</comment>
<dbReference type="EC" id="1.2.1.12" evidence="1"/>
<dbReference type="EMBL" id="M63374">
    <property type="protein sequence ID" value="AAA26555.1"/>
    <property type="molecule type" value="Genomic_DNA"/>
</dbReference>
<dbReference type="SMR" id="P24753"/>
<dbReference type="UniPathway" id="UPA00109">
    <property type="reaction ID" value="UER00184"/>
</dbReference>
<dbReference type="GO" id="GO:0005737">
    <property type="term" value="C:cytoplasm"/>
    <property type="evidence" value="ECO:0007669"/>
    <property type="project" value="UniProtKB-SubCell"/>
</dbReference>
<dbReference type="GO" id="GO:0004365">
    <property type="term" value="F:glyceraldehyde-3-phosphate dehydrogenase (NAD+) (phosphorylating) activity"/>
    <property type="evidence" value="ECO:0000250"/>
    <property type="project" value="UniProtKB"/>
</dbReference>
<dbReference type="GO" id="GO:0051287">
    <property type="term" value="F:NAD binding"/>
    <property type="evidence" value="ECO:0000250"/>
    <property type="project" value="UniProtKB"/>
</dbReference>
<dbReference type="GO" id="GO:0050661">
    <property type="term" value="F:NADP binding"/>
    <property type="evidence" value="ECO:0007669"/>
    <property type="project" value="InterPro"/>
</dbReference>
<dbReference type="GO" id="GO:0006006">
    <property type="term" value="P:glucose metabolic process"/>
    <property type="evidence" value="ECO:0007669"/>
    <property type="project" value="InterPro"/>
</dbReference>
<dbReference type="GO" id="GO:0006096">
    <property type="term" value="P:glycolytic process"/>
    <property type="evidence" value="ECO:0007669"/>
    <property type="project" value="UniProtKB-UniPathway"/>
</dbReference>
<dbReference type="CDD" id="cd18126">
    <property type="entry name" value="GAPDH_I_C"/>
    <property type="match status" value="1"/>
</dbReference>
<dbReference type="CDD" id="cd05214">
    <property type="entry name" value="GAPDH_I_N"/>
    <property type="match status" value="1"/>
</dbReference>
<dbReference type="FunFam" id="3.30.360.10:FF:000001">
    <property type="entry name" value="Glyceraldehyde-3-phosphate dehydrogenase"/>
    <property type="match status" value="1"/>
</dbReference>
<dbReference type="FunFam" id="3.40.50.720:FF:000001">
    <property type="entry name" value="Glyceraldehyde-3-phosphate dehydrogenase"/>
    <property type="match status" value="1"/>
</dbReference>
<dbReference type="Gene3D" id="3.30.360.10">
    <property type="entry name" value="Dihydrodipicolinate Reductase, domain 2"/>
    <property type="match status" value="1"/>
</dbReference>
<dbReference type="Gene3D" id="3.40.50.720">
    <property type="entry name" value="NAD(P)-binding Rossmann-like Domain"/>
    <property type="match status" value="1"/>
</dbReference>
<dbReference type="InterPro" id="IPR020831">
    <property type="entry name" value="GlycerAld/Erythrose_P_DH"/>
</dbReference>
<dbReference type="InterPro" id="IPR020830">
    <property type="entry name" value="GlycerAld_3-P_DH_AS"/>
</dbReference>
<dbReference type="InterPro" id="IPR020829">
    <property type="entry name" value="GlycerAld_3-P_DH_cat"/>
</dbReference>
<dbReference type="InterPro" id="IPR020828">
    <property type="entry name" value="GlycerAld_3-P_DH_NAD(P)-bd"/>
</dbReference>
<dbReference type="InterPro" id="IPR006424">
    <property type="entry name" value="Glyceraldehyde-3-P_DH_1"/>
</dbReference>
<dbReference type="InterPro" id="IPR036291">
    <property type="entry name" value="NAD(P)-bd_dom_sf"/>
</dbReference>
<dbReference type="NCBIfam" id="TIGR01534">
    <property type="entry name" value="GAPDH-I"/>
    <property type="match status" value="1"/>
</dbReference>
<dbReference type="PANTHER" id="PTHR10836">
    <property type="entry name" value="GLYCERALDEHYDE 3-PHOSPHATE DEHYDROGENASE"/>
    <property type="match status" value="1"/>
</dbReference>
<dbReference type="PANTHER" id="PTHR10836:SF76">
    <property type="entry name" value="GLYCERALDEHYDE-3-PHOSPHATE DEHYDROGENASE-RELATED"/>
    <property type="match status" value="1"/>
</dbReference>
<dbReference type="Pfam" id="PF02800">
    <property type="entry name" value="Gp_dh_C"/>
    <property type="match status" value="1"/>
</dbReference>
<dbReference type="Pfam" id="PF00044">
    <property type="entry name" value="Gp_dh_N"/>
    <property type="match status" value="1"/>
</dbReference>
<dbReference type="PIRSF" id="PIRSF000149">
    <property type="entry name" value="GAP_DH"/>
    <property type="match status" value="1"/>
</dbReference>
<dbReference type="PRINTS" id="PR00078">
    <property type="entry name" value="G3PDHDRGNASE"/>
</dbReference>
<dbReference type="SMART" id="SM00846">
    <property type="entry name" value="Gp_dh_N"/>
    <property type="match status" value="1"/>
</dbReference>
<dbReference type="SUPFAM" id="SSF55347">
    <property type="entry name" value="Glyceraldehyde-3-phosphate dehydrogenase-like, C-terminal domain"/>
    <property type="match status" value="1"/>
</dbReference>
<dbReference type="SUPFAM" id="SSF51735">
    <property type="entry name" value="NAD(P)-binding Rossmann-fold domains"/>
    <property type="match status" value="1"/>
</dbReference>
<dbReference type="PROSITE" id="PS00071">
    <property type="entry name" value="GAPDH"/>
    <property type="match status" value="1"/>
</dbReference>